<organism>
    <name type="scientific">Homo sapiens</name>
    <name type="common">Human</name>
    <dbReference type="NCBI Taxonomy" id="9606"/>
    <lineage>
        <taxon>Eukaryota</taxon>
        <taxon>Metazoa</taxon>
        <taxon>Chordata</taxon>
        <taxon>Craniata</taxon>
        <taxon>Vertebrata</taxon>
        <taxon>Euteleostomi</taxon>
        <taxon>Mammalia</taxon>
        <taxon>Eutheria</taxon>
        <taxon>Euarchontoglires</taxon>
        <taxon>Primates</taxon>
        <taxon>Haplorrhini</taxon>
        <taxon>Catarrhini</taxon>
        <taxon>Hominidae</taxon>
        <taxon>Homo</taxon>
    </lineage>
</organism>
<proteinExistence type="evidence at protein level"/>
<gene>
    <name type="primary">MTIF3</name>
    <name type="ORF">DC38</name>
</gene>
<accession>Q9H2K0</accession>
<accession>Q05BL8</accession>
<accession>Q5W0V0</accession>
<accession>Q86X68</accession>
<feature type="transit peptide" description="Mitochondrion">
    <location>
        <begin position="1"/>
        <end position="31"/>
    </location>
</feature>
<feature type="chain" id="PRO_0000280037" description="Translation initiation factor IF-3, mitochondrial">
    <location>
        <begin position="32"/>
        <end position="278"/>
    </location>
</feature>
<feature type="region of interest" description="Disordered" evidence="1">
    <location>
        <begin position="249"/>
        <end position="278"/>
    </location>
</feature>
<feature type="sequence variant" id="VAR_031045" description="In dbSNP:rs17857314." evidence="3">
    <original>T</original>
    <variation>I</variation>
    <location>
        <position position="68"/>
    </location>
</feature>
<feature type="sequence variant" id="VAR_031046" description="In dbSNP:rs1218825." evidence="2 3 4">
    <original>F</original>
    <variation>L</variation>
    <location>
        <position position="243"/>
    </location>
</feature>
<feature type="strand" evidence="7">
    <location>
        <begin position="85"/>
        <end position="90"/>
    </location>
</feature>
<feature type="strand" evidence="6">
    <location>
        <begin position="92"/>
        <end position="94"/>
    </location>
</feature>
<feature type="strand" evidence="7">
    <location>
        <begin position="96"/>
        <end position="101"/>
    </location>
</feature>
<feature type="helix" evidence="7">
    <location>
        <begin position="102"/>
        <end position="111"/>
    </location>
</feature>
<feature type="strand" evidence="7">
    <location>
        <begin position="115"/>
        <end position="125"/>
    </location>
</feature>
<feature type="strand" evidence="7">
    <location>
        <begin position="127"/>
        <end position="131"/>
    </location>
</feature>
<feature type="helix" evidence="7">
    <location>
        <begin position="133"/>
        <end position="149"/>
    </location>
</feature>
<feature type="strand" evidence="7">
    <location>
        <begin position="158"/>
        <end position="164"/>
    </location>
</feature>
<feature type="helix" evidence="7">
    <location>
        <begin position="169"/>
        <end position="184"/>
    </location>
</feature>
<feature type="strand" evidence="7">
    <location>
        <begin position="188"/>
        <end position="194"/>
    </location>
</feature>
<feature type="turn" evidence="7">
    <location>
        <begin position="204"/>
        <end position="206"/>
    </location>
</feature>
<feature type="helix" evidence="7">
    <location>
        <begin position="208"/>
        <end position="216"/>
    </location>
</feature>
<feature type="strand" evidence="7">
    <location>
        <begin position="217"/>
        <end position="225"/>
    </location>
</feature>
<feature type="turn" evidence="7">
    <location>
        <begin position="230"/>
        <end position="233"/>
    </location>
</feature>
<feature type="strand" evidence="7">
    <location>
        <begin position="236"/>
        <end position="242"/>
    </location>
</feature>
<feature type="helix" evidence="7">
    <location>
        <begin position="245"/>
        <end position="260"/>
    </location>
</feature>
<dbReference type="EMBL" id="AF410851">
    <property type="protein sequence ID" value="AAL04150.1"/>
    <property type="molecule type" value="mRNA"/>
</dbReference>
<dbReference type="EMBL" id="AF265440">
    <property type="protein sequence ID" value="AAG44698.1"/>
    <property type="molecule type" value="mRNA"/>
</dbReference>
<dbReference type="EMBL" id="AL137059">
    <property type="status" value="NOT_ANNOTATED_CDS"/>
    <property type="molecule type" value="Genomic_DNA"/>
</dbReference>
<dbReference type="EMBL" id="BC039599">
    <property type="protein sequence ID" value="AAH39599.1"/>
    <property type="status" value="ALT_FRAME"/>
    <property type="molecule type" value="mRNA"/>
</dbReference>
<dbReference type="EMBL" id="BC046166">
    <property type="protein sequence ID" value="AAH46166.1"/>
    <property type="molecule type" value="mRNA"/>
</dbReference>
<dbReference type="CCDS" id="CCDS9322.1"/>
<dbReference type="RefSeq" id="NP_001159733.1">
    <property type="nucleotide sequence ID" value="NM_001166261.2"/>
</dbReference>
<dbReference type="RefSeq" id="NP_001159734.1">
    <property type="nucleotide sequence ID" value="NM_001166262.2"/>
</dbReference>
<dbReference type="RefSeq" id="NP_001159735.1">
    <property type="nucleotide sequence ID" value="NM_001166263.2"/>
</dbReference>
<dbReference type="RefSeq" id="NP_690876.3">
    <property type="nucleotide sequence ID" value="NM_152912.4"/>
</dbReference>
<dbReference type="RefSeq" id="XP_006719834.1">
    <property type="nucleotide sequence ID" value="XM_006719771.4"/>
</dbReference>
<dbReference type="RefSeq" id="XP_006719835.1">
    <property type="nucleotide sequence ID" value="XM_006719772.5"/>
</dbReference>
<dbReference type="RefSeq" id="XP_011533259.1">
    <property type="nucleotide sequence ID" value="XM_011534957.4"/>
</dbReference>
<dbReference type="RefSeq" id="XP_011533260.1">
    <property type="nucleotide sequence ID" value="XM_011534958.4"/>
</dbReference>
<dbReference type="RefSeq" id="XP_011533261.1">
    <property type="nucleotide sequence ID" value="XM_011534959.4"/>
</dbReference>
<dbReference type="RefSeq" id="XP_011533262.1">
    <property type="nucleotide sequence ID" value="XM_011534960.3"/>
</dbReference>
<dbReference type="RefSeq" id="XP_011533263.1">
    <property type="nucleotide sequence ID" value="XM_011534961.4"/>
</dbReference>
<dbReference type="RefSeq" id="XP_011533264.1">
    <property type="nucleotide sequence ID" value="XM_011534962.3"/>
</dbReference>
<dbReference type="RefSeq" id="XP_011533265.1">
    <property type="nucleotide sequence ID" value="XM_011534963.4"/>
</dbReference>
<dbReference type="RefSeq" id="XP_016875906.1">
    <property type="nucleotide sequence ID" value="XM_017020417.2"/>
</dbReference>
<dbReference type="RefSeq" id="XP_047286082.1">
    <property type="nucleotide sequence ID" value="XM_047430126.1"/>
</dbReference>
<dbReference type="RefSeq" id="XP_047286083.1">
    <property type="nucleotide sequence ID" value="XM_047430127.1"/>
</dbReference>
<dbReference type="RefSeq" id="XP_047286084.1">
    <property type="nucleotide sequence ID" value="XM_047430128.1"/>
</dbReference>
<dbReference type="RefSeq" id="XP_047286085.1">
    <property type="nucleotide sequence ID" value="XM_047430129.1"/>
</dbReference>
<dbReference type="RefSeq" id="XP_047286086.1">
    <property type="nucleotide sequence ID" value="XM_047430130.1"/>
</dbReference>
<dbReference type="RefSeq" id="XP_047286087.1">
    <property type="nucleotide sequence ID" value="XM_047430131.1"/>
</dbReference>
<dbReference type="RefSeq" id="XP_047286088.1">
    <property type="nucleotide sequence ID" value="XM_047430132.1"/>
</dbReference>
<dbReference type="RefSeq" id="XP_047286089.1">
    <property type="nucleotide sequence ID" value="XM_047430133.1"/>
</dbReference>
<dbReference type="RefSeq" id="XP_047286090.1">
    <property type="nucleotide sequence ID" value="XM_047430134.1"/>
</dbReference>
<dbReference type="PDB" id="6NEQ">
    <property type="method" value="EM"/>
    <property type="resolution" value="3.32 A"/>
    <property type="chains" value="z=32-278"/>
</dbReference>
<dbReference type="PDB" id="6NF8">
    <property type="method" value="EM"/>
    <property type="resolution" value="3.48 A"/>
    <property type="chains" value="z=32-278"/>
</dbReference>
<dbReference type="PDB" id="6RW4">
    <property type="method" value="EM"/>
    <property type="resolution" value="2.97 A"/>
    <property type="chains" value="8=1-278"/>
</dbReference>
<dbReference type="PDB" id="6RW5">
    <property type="method" value="EM"/>
    <property type="resolution" value="3.14 A"/>
    <property type="chains" value="8=1-278"/>
</dbReference>
<dbReference type="PDB" id="7P2E">
    <property type="method" value="EM"/>
    <property type="resolution" value="2.40 A"/>
    <property type="chains" value="8=1-278"/>
</dbReference>
<dbReference type="PDB" id="8QRM">
    <property type="method" value="EM"/>
    <property type="resolution" value="3.05 A"/>
    <property type="chains" value="8=1-278"/>
</dbReference>
<dbReference type="PDBsum" id="6NEQ"/>
<dbReference type="PDBsum" id="6NF8"/>
<dbReference type="PDBsum" id="6RW4"/>
<dbReference type="PDBsum" id="6RW5"/>
<dbReference type="PDBsum" id="7P2E"/>
<dbReference type="PDBsum" id="8QRM"/>
<dbReference type="EMDB" id="EMD-10021"/>
<dbReference type="EMDB" id="EMD-10022"/>
<dbReference type="EMDB" id="EMD-13170"/>
<dbReference type="EMDB" id="EMD-9358"/>
<dbReference type="EMDB" id="EMD-9362"/>
<dbReference type="SMR" id="Q9H2K0"/>
<dbReference type="BioGRID" id="128525">
    <property type="interactions" value="297"/>
</dbReference>
<dbReference type="FunCoup" id="Q9H2K0">
    <property type="interactions" value="627"/>
</dbReference>
<dbReference type="IntAct" id="Q9H2K0">
    <property type="interactions" value="83"/>
</dbReference>
<dbReference type="STRING" id="9606.ENSP00000370508"/>
<dbReference type="iPTMnet" id="Q9H2K0"/>
<dbReference type="PhosphoSitePlus" id="Q9H2K0"/>
<dbReference type="BioMuta" id="MTIF3"/>
<dbReference type="DMDM" id="317373570"/>
<dbReference type="jPOST" id="Q9H2K0"/>
<dbReference type="MassIVE" id="Q9H2K0"/>
<dbReference type="PaxDb" id="9606-ENSP00000370508"/>
<dbReference type="PeptideAtlas" id="Q9H2K0"/>
<dbReference type="ProteomicsDB" id="80558"/>
<dbReference type="Pumba" id="Q9H2K0"/>
<dbReference type="Antibodypedia" id="22665">
    <property type="antibodies" value="322 antibodies from 26 providers"/>
</dbReference>
<dbReference type="DNASU" id="219402"/>
<dbReference type="Ensembl" id="ENST00000381116.5">
    <property type="protein sequence ID" value="ENSP00000370508.1"/>
    <property type="gene ID" value="ENSG00000122033.15"/>
</dbReference>
<dbReference type="Ensembl" id="ENST00000381120.8">
    <property type="protein sequence ID" value="ENSP00000370512.3"/>
    <property type="gene ID" value="ENSG00000122033.15"/>
</dbReference>
<dbReference type="Ensembl" id="ENST00000405591.3">
    <property type="protein sequence ID" value="ENSP00000384659.2"/>
    <property type="gene ID" value="ENSG00000122033.15"/>
</dbReference>
<dbReference type="GeneID" id="219402"/>
<dbReference type="KEGG" id="hsa:219402"/>
<dbReference type="MANE-Select" id="ENST00000381120.8">
    <property type="protein sequence ID" value="ENSP00000370512.3"/>
    <property type="RefSeq nucleotide sequence ID" value="NM_152912.5"/>
    <property type="RefSeq protein sequence ID" value="NP_690876.3"/>
</dbReference>
<dbReference type="UCSC" id="uc001urh.4">
    <property type="organism name" value="human"/>
</dbReference>
<dbReference type="AGR" id="HGNC:29788"/>
<dbReference type="CTD" id="219402"/>
<dbReference type="DisGeNET" id="219402"/>
<dbReference type="GeneCards" id="MTIF3"/>
<dbReference type="HGNC" id="HGNC:29788">
    <property type="gene designation" value="MTIF3"/>
</dbReference>
<dbReference type="HPA" id="ENSG00000122033">
    <property type="expression patterns" value="Low tissue specificity"/>
</dbReference>
<dbReference type="MIM" id="619554">
    <property type="type" value="gene"/>
</dbReference>
<dbReference type="neXtProt" id="NX_Q9H2K0"/>
<dbReference type="OpenTargets" id="ENSG00000122033"/>
<dbReference type="PharmGKB" id="PA162396264"/>
<dbReference type="VEuPathDB" id="HostDB:ENSG00000122033"/>
<dbReference type="eggNOG" id="ENOG502SBZS">
    <property type="taxonomic scope" value="Eukaryota"/>
</dbReference>
<dbReference type="GeneTree" id="ENSGT00390000014424"/>
<dbReference type="HOGENOM" id="CLU_086230_0_1_1"/>
<dbReference type="InParanoid" id="Q9H2K0"/>
<dbReference type="OMA" id="SAGCVRW"/>
<dbReference type="OrthoDB" id="21573at2759"/>
<dbReference type="PAN-GO" id="Q9H2K0">
    <property type="GO annotations" value="5 GO annotations based on evolutionary models"/>
</dbReference>
<dbReference type="PhylomeDB" id="Q9H2K0"/>
<dbReference type="TreeFam" id="TF332326"/>
<dbReference type="PathwayCommons" id="Q9H2K0"/>
<dbReference type="Reactome" id="R-HSA-5368286">
    <property type="pathway name" value="Mitochondrial translation initiation"/>
</dbReference>
<dbReference type="SignaLink" id="Q9H2K0"/>
<dbReference type="BioGRID-ORCS" id="219402">
    <property type="hits" value="32 hits in 1125 CRISPR screens"/>
</dbReference>
<dbReference type="ChiTaRS" id="MTIF3">
    <property type="organism name" value="human"/>
</dbReference>
<dbReference type="GenomeRNAi" id="219402"/>
<dbReference type="Pharos" id="Q9H2K0">
    <property type="development level" value="Tbio"/>
</dbReference>
<dbReference type="PRO" id="PR:Q9H2K0"/>
<dbReference type="Proteomes" id="UP000005640">
    <property type="component" value="Chromosome 13"/>
</dbReference>
<dbReference type="RNAct" id="Q9H2K0">
    <property type="molecule type" value="protein"/>
</dbReference>
<dbReference type="Bgee" id="ENSG00000122033">
    <property type="expression patterns" value="Expressed in apex of heart and 188 other cell types or tissues"/>
</dbReference>
<dbReference type="GO" id="GO:0005739">
    <property type="term" value="C:mitochondrion"/>
    <property type="evidence" value="ECO:0006056"/>
    <property type="project" value="FlyBase"/>
</dbReference>
<dbReference type="GO" id="GO:0043024">
    <property type="term" value="F:ribosomal small subunit binding"/>
    <property type="evidence" value="ECO:0000314"/>
    <property type="project" value="BHF-UCL"/>
</dbReference>
<dbReference type="GO" id="GO:0043022">
    <property type="term" value="F:ribosome binding"/>
    <property type="evidence" value="ECO:0000318"/>
    <property type="project" value="GO_Central"/>
</dbReference>
<dbReference type="GO" id="GO:0008135">
    <property type="term" value="F:translation factor activity, RNA binding"/>
    <property type="evidence" value="ECO:0000314"/>
    <property type="project" value="BHF-UCL"/>
</dbReference>
<dbReference type="GO" id="GO:0003743">
    <property type="term" value="F:translation initiation factor activity"/>
    <property type="evidence" value="ECO:0000318"/>
    <property type="project" value="GO_Central"/>
</dbReference>
<dbReference type="GO" id="GO:0070124">
    <property type="term" value="P:mitochondrial translational initiation"/>
    <property type="evidence" value="ECO:0000318"/>
    <property type="project" value="GO_Central"/>
</dbReference>
<dbReference type="GO" id="GO:0032790">
    <property type="term" value="P:ribosome disassembly"/>
    <property type="evidence" value="ECO:0000314"/>
    <property type="project" value="BHF-UCL"/>
</dbReference>
<dbReference type="FunFam" id="3.10.20.80:FF:000002">
    <property type="entry name" value="Mitochondrial translational initiation factor 3"/>
    <property type="match status" value="1"/>
</dbReference>
<dbReference type="FunFam" id="3.30.110.10:FF:000004">
    <property type="entry name" value="Translation initiation factor IF-3, mitochondrial"/>
    <property type="match status" value="1"/>
</dbReference>
<dbReference type="Gene3D" id="3.30.110.10">
    <property type="entry name" value="Translation initiation factor 3 (IF-3), C-terminal domain"/>
    <property type="match status" value="1"/>
</dbReference>
<dbReference type="Gene3D" id="3.10.20.80">
    <property type="entry name" value="Translation initiation factor 3 (IF-3), N-terminal domain"/>
    <property type="match status" value="1"/>
</dbReference>
<dbReference type="InterPro" id="IPR036788">
    <property type="entry name" value="T_IF-3_C_sf"/>
</dbReference>
<dbReference type="InterPro" id="IPR036787">
    <property type="entry name" value="T_IF-3_N_sf"/>
</dbReference>
<dbReference type="InterPro" id="IPR001288">
    <property type="entry name" value="Translation_initiation_fac_3"/>
</dbReference>
<dbReference type="InterPro" id="IPR019814">
    <property type="entry name" value="Translation_initiation_fac_3_N"/>
</dbReference>
<dbReference type="PANTHER" id="PTHR10938">
    <property type="entry name" value="TRANSLATION INITIATION FACTOR IF-3"/>
    <property type="match status" value="1"/>
</dbReference>
<dbReference type="PANTHER" id="PTHR10938:SF0">
    <property type="entry name" value="TRANSLATION INITIATION FACTOR IF-3, MITOCHONDRIAL"/>
    <property type="match status" value="1"/>
</dbReference>
<dbReference type="Pfam" id="PF05198">
    <property type="entry name" value="IF3_N"/>
    <property type="match status" value="1"/>
</dbReference>
<dbReference type="SUPFAM" id="SSF55200">
    <property type="entry name" value="Translation initiation factor IF3, C-terminal domain"/>
    <property type="match status" value="1"/>
</dbReference>
<dbReference type="SUPFAM" id="SSF54364">
    <property type="entry name" value="Translation initiation factor IF3, N-terminal domain"/>
    <property type="match status" value="1"/>
</dbReference>
<protein>
    <recommendedName>
        <fullName>Translation initiation factor IF-3, mitochondrial</fullName>
        <shortName>IF-3(Mt)</shortName>
        <shortName>IF-3Mt</shortName>
        <shortName>IF3(mt)</shortName>
        <shortName>IF3mt</shortName>
    </recommendedName>
</protein>
<keyword id="KW-0002">3D-structure</keyword>
<keyword id="KW-0903">Direct protein sequencing</keyword>
<keyword id="KW-0396">Initiation factor</keyword>
<keyword id="KW-0496">Mitochondrion</keyword>
<keyword id="KW-0648">Protein biosynthesis</keyword>
<keyword id="KW-1267">Proteomics identification</keyword>
<keyword id="KW-1185">Reference proteome</keyword>
<keyword id="KW-0809">Transit peptide</keyword>
<sequence>MAALFLKRLTLQTVKSENSCIRCFGKHILQKTAPAQLSPIASAPRLSFLIHAKAFSTAEDTQNEGKKTKKNKTAFSNVGRKISQRVIHLFDEKGNDLGNMHRANVIRLMDERDLRLVQRNTSTEPAEYQLMTGLQILQERQRLREMEKANPKTGPTLRKELILSSNIGQHDLDTKTKQIQQWIKKKHLVQITIKKGKNVDVSENEMEEIFHQILQTMPGIATFSSRPQAVQGGKALMCVLRAFSKNEEKAYKETQETQERDTLNKDHGNDKESNVLHQ</sequence>
<name>IF3M_HUMAN</name>
<reference key="1">
    <citation type="journal article" date="2002" name="J. Biol. Chem.">
        <title>Identification of mammalian mitochondrial translational initiation factor 3 and examination of its role in initiation complex formation with natural mRNAs.</title>
        <authorList>
            <person name="Koc E.C."/>
            <person name="Spremulli L.L."/>
        </authorList>
    </citation>
    <scope>NUCLEOTIDE SEQUENCE [MRNA]</scope>
    <scope>PROTEIN SEQUENCE OF 98-104</scope>
    <scope>FUNCTION</scope>
    <scope>VARIANT LEU-243</scope>
    <source>
        <tissue>Melanocyte</tissue>
    </source>
</reference>
<reference key="2">
    <citation type="submission" date="2000-05" db="EMBL/GenBank/DDBJ databases">
        <title>A novel gene from human dendritic cells.</title>
        <authorList>
            <person name="Xu X."/>
            <person name="Yang Y."/>
            <person name="Gao G."/>
            <person name="Xiao H."/>
            <person name="Chen Z."/>
            <person name="Han Z."/>
        </authorList>
    </citation>
    <scope>NUCLEOTIDE SEQUENCE [LARGE SCALE MRNA]</scope>
    <scope>VARIANT LEU-243</scope>
    <source>
        <tissue>Dendritic cell</tissue>
    </source>
</reference>
<reference key="3">
    <citation type="journal article" date="2004" name="Nature">
        <title>The DNA sequence and analysis of human chromosome 13.</title>
        <authorList>
            <person name="Dunham A."/>
            <person name="Matthews L.H."/>
            <person name="Burton J."/>
            <person name="Ashurst J.L."/>
            <person name="Howe K.L."/>
            <person name="Ashcroft K.J."/>
            <person name="Beare D.M."/>
            <person name="Burford D.C."/>
            <person name="Hunt S.E."/>
            <person name="Griffiths-Jones S."/>
            <person name="Jones M.C."/>
            <person name="Keenan S.J."/>
            <person name="Oliver K."/>
            <person name="Scott C.E."/>
            <person name="Ainscough R."/>
            <person name="Almeida J.P."/>
            <person name="Ambrose K.D."/>
            <person name="Andrews D.T."/>
            <person name="Ashwell R.I.S."/>
            <person name="Babbage A.K."/>
            <person name="Bagguley C.L."/>
            <person name="Bailey J."/>
            <person name="Bannerjee R."/>
            <person name="Barlow K.F."/>
            <person name="Bates K."/>
            <person name="Beasley H."/>
            <person name="Bird C.P."/>
            <person name="Bray-Allen S."/>
            <person name="Brown A.J."/>
            <person name="Brown J.Y."/>
            <person name="Burrill W."/>
            <person name="Carder C."/>
            <person name="Carter N.P."/>
            <person name="Chapman J.C."/>
            <person name="Clamp M.E."/>
            <person name="Clark S.Y."/>
            <person name="Clarke G."/>
            <person name="Clee C.M."/>
            <person name="Clegg S.C."/>
            <person name="Cobley V."/>
            <person name="Collins J.E."/>
            <person name="Corby N."/>
            <person name="Coville G.J."/>
            <person name="Deloukas P."/>
            <person name="Dhami P."/>
            <person name="Dunham I."/>
            <person name="Dunn M."/>
            <person name="Earthrowl M.E."/>
            <person name="Ellington A.G."/>
            <person name="Faulkner L."/>
            <person name="Frankish A.G."/>
            <person name="Frankland J."/>
            <person name="French L."/>
            <person name="Garner P."/>
            <person name="Garnett J."/>
            <person name="Gilbert J.G.R."/>
            <person name="Gilson C.J."/>
            <person name="Ghori J."/>
            <person name="Grafham D.V."/>
            <person name="Gribble S.M."/>
            <person name="Griffiths C."/>
            <person name="Hall R.E."/>
            <person name="Hammond S."/>
            <person name="Harley J.L."/>
            <person name="Hart E.A."/>
            <person name="Heath P.D."/>
            <person name="Howden P.J."/>
            <person name="Huckle E.J."/>
            <person name="Hunt P.J."/>
            <person name="Hunt A.R."/>
            <person name="Johnson C."/>
            <person name="Johnson D."/>
            <person name="Kay M."/>
            <person name="Kimberley A.M."/>
            <person name="King A."/>
            <person name="Laird G.K."/>
            <person name="Langford C.J."/>
            <person name="Lawlor S."/>
            <person name="Leongamornlert D.A."/>
            <person name="Lloyd D.M."/>
            <person name="Lloyd C."/>
            <person name="Loveland J.E."/>
            <person name="Lovell J."/>
            <person name="Martin S."/>
            <person name="Mashreghi-Mohammadi M."/>
            <person name="McLaren S.J."/>
            <person name="McMurray A."/>
            <person name="Milne S."/>
            <person name="Moore M.J.F."/>
            <person name="Nickerson T."/>
            <person name="Palmer S.A."/>
            <person name="Pearce A.V."/>
            <person name="Peck A.I."/>
            <person name="Pelan S."/>
            <person name="Phillimore B."/>
            <person name="Porter K.M."/>
            <person name="Rice C.M."/>
            <person name="Searle S."/>
            <person name="Sehra H.K."/>
            <person name="Shownkeen R."/>
            <person name="Skuce C.D."/>
            <person name="Smith M."/>
            <person name="Steward C.A."/>
            <person name="Sycamore N."/>
            <person name="Tester J."/>
            <person name="Thomas D.W."/>
            <person name="Tracey A."/>
            <person name="Tromans A."/>
            <person name="Tubby B."/>
            <person name="Wall M."/>
            <person name="Wallis J.M."/>
            <person name="West A.P."/>
            <person name="Whitehead S.L."/>
            <person name="Willey D.L."/>
            <person name="Wilming L."/>
            <person name="Wray P.W."/>
            <person name="Wright M.W."/>
            <person name="Young L."/>
            <person name="Coulson A."/>
            <person name="Durbin R.M."/>
            <person name="Hubbard T."/>
            <person name="Sulston J.E."/>
            <person name="Beck S."/>
            <person name="Bentley D.R."/>
            <person name="Rogers J."/>
            <person name="Ross M.T."/>
        </authorList>
    </citation>
    <scope>NUCLEOTIDE SEQUENCE [LARGE SCALE GENOMIC DNA]</scope>
</reference>
<reference key="4">
    <citation type="journal article" date="2004" name="Genome Res.">
        <title>The status, quality, and expansion of the NIH full-length cDNA project: the Mammalian Gene Collection (MGC).</title>
        <authorList>
            <consortium name="The MGC Project Team"/>
        </authorList>
    </citation>
    <scope>NUCLEOTIDE SEQUENCE [LARGE SCALE MRNA]</scope>
    <scope>VARIANTS ILE-68 AND LEU-243</scope>
    <source>
        <tissue>Cervix</tissue>
        <tissue>Colon</tissue>
    </source>
</reference>
<reference key="5">
    <citation type="journal article" date="2015" name="Proteomics">
        <title>N-terminome analysis of the human mitochondrial proteome.</title>
        <authorList>
            <person name="Vaca Jacome A.S."/>
            <person name="Rabilloud T."/>
            <person name="Schaeffer-Reiss C."/>
            <person name="Rompais M."/>
            <person name="Ayoub D."/>
            <person name="Lane L."/>
            <person name="Bairoch A."/>
            <person name="Van Dorsselaer A."/>
            <person name="Carapito C."/>
        </authorList>
    </citation>
    <scope>IDENTIFICATION BY MASS SPECTROMETRY [LARGE SCALE ANALYSIS]</scope>
</reference>
<comment type="function">
    <text evidence="2">IF-3 binds to the 28S ribosomal subunit and shifts the equilibrium between 55S ribosomes and their 39S and 28S subunits in favor of the free subunits, thus enhancing the availability of 28S subunits on which protein synthesis initiation begins.</text>
</comment>
<comment type="interaction">
    <interactant intactId="EBI-3923617">
        <id>Q9H2K0</id>
    </interactant>
    <interactant intactId="EBI-715495">
        <id>P05090</id>
        <label>APOD</label>
    </interactant>
    <organismsDiffer>false</organismsDiffer>
    <experiments>3</experiments>
</comment>
<comment type="interaction">
    <interactant intactId="EBI-3923617">
        <id>Q9H2K0</id>
    </interactant>
    <interactant intactId="EBI-78035">
        <id>Q07817</id>
        <label>BCL2L1</label>
    </interactant>
    <organismsDiffer>false</organismsDiffer>
    <experiments>3</experiments>
</comment>
<comment type="interaction">
    <interactant intactId="EBI-3923617">
        <id>Q9H2K0</id>
    </interactant>
    <interactant intactId="EBI-3922513">
        <id>O95393</id>
        <label>BMP10</label>
    </interactant>
    <organismsDiffer>false</organismsDiffer>
    <experiments>3</experiments>
</comment>
<comment type="interaction">
    <interactant intactId="EBI-3923617">
        <id>Q9H2K0</id>
    </interactant>
    <interactant intactId="EBI-953896">
        <id>Q9NP55</id>
        <label>BPIFA1</label>
    </interactant>
    <organismsDiffer>false</organismsDiffer>
    <experiments>3</experiments>
</comment>
<comment type="interaction">
    <interactant intactId="EBI-3923617">
        <id>Q9H2K0</id>
    </interactant>
    <interactant intactId="EBI-12244618">
        <id>Q6PL45-2</id>
        <label>BRICD5</label>
    </interactant>
    <organismsDiffer>false</organismsDiffer>
    <experiments>3</experiments>
</comment>
<comment type="interaction">
    <interactant intactId="EBI-3923617">
        <id>Q9H2K0</id>
    </interactant>
    <interactant intactId="EBI-23900553">
        <id>Q86V35</id>
        <label>CABP7</label>
    </interactant>
    <organismsDiffer>false</organismsDiffer>
    <experiments>3</experiments>
</comment>
<comment type="interaction">
    <interactant intactId="EBI-3923617">
        <id>Q9H2K0</id>
    </interactant>
    <interactant intactId="EBI-17263290">
        <id>Q08722-3</id>
        <label>CD47</label>
    </interactant>
    <organismsDiffer>false</organismsDiffer>
    <experiments>3</experiments>
</comment>
<comment type="interaction">
    <interactant intactId="EBI-3923617">
        <id>Q9H2K0</id>
    </interactant>
    <interactant intactId="EBI-358858">
        <id>O14735</id>
        <label>CDIPT</label>
    </interactant>
    <organismsDiffer>false</organismsDiffer>
    <experiments>3</experiments>
</comment>
<comment type="interaction">
    <interactant intactId="EBI-3923617">
        <id>Q9H2K0</id>
    </interactant>
    <interactant intactId="EBI-3913685">
        <id>O95674</id>
        <label>CDS2</label>
    </interactant>
    <organismsDiffer>false</organismsDiffer>
    <experiments>3</experiments>
</comment>
<comment type="interaction">
    <interactant intactId="EBI-3923617">
        <id>Q9H2K0</id>
    </interactant>
    <interactant intactId="EBI-2130213">
        <id>Q99675</id>
        <label>CGRRF1</label>
    </interactant>
    <organismsDiffer>false</organismsDiffer>
    <experiments>3</experiments>
</comment>
<comment type="interaction">
    <interactant intactId="EBI-3923617">
        <id>Q9H2K0</id>
    </interactant>
    <interactant intactId="EBI-11959453">
        <id>Q8NHS1</id>
        <label>CLDND2</label>
    </interactant>
    <organismsDiffer>false</organismsDiffer>
    <experiments>3</experiments>
</comment>
<comment type="interaction">
    <interactant intactId="EBI-3923617">
        <id>Q9H2K0</id>
    </interactant>
    <interactant intactId="EBI-11989440">
        <id>Q9BXN2-6</id>
        <label>CLEC7A</label>
    </interactant>
    <organismsDiffer>false</organismsDiffer>
    <experiments>3</experiments>
</comment>
<comment type="interaction">
    <interactant intactId="EBI-3923617">
        <id>Q9H2K0</id>
    </interactant>
    <interactant intactId="EBI-11522780">
        <id>Q96DZ9-2</id>
        <label>CMTM5</label>
    </interactant>
    <organismsDiffer>false</organismsDiffer>
    <experiments>3</experiments>
</comment>
<comment type="interaction">
    <interactant intactId="EBI-3923617">
        <id>Q9H2K0</id>
    </interactant>
    <interactant intactId="EBI-12211159">
        <id>P29400-2</id>
        <label>COL4A5</label>
    </interactant>
    <organismsDiffer>false</organismsDiffer>
    <experiments>3</experiments>
</comment>
<comment type="interaction">
    <interactant intactId="EBI-3923617">
        <id>Q9H2K0</id>
    </interactant>
    <interactant intactId="EBI-745535">
        <id>Q8NI60</id>
        <label>COQ8A</label>
    </interactant>
    <organismsDiffer>false</organismsDiffer>
    <experiments>3</experiments>
</comment>
<comment type="interaction">
    <interactant intactId="EBI-3923617">
        <id>Q9H2K0</id>
    </interactant>
    <interactant intactId="EBI-12019274">
        <id>Q4LDR2</id>
        <label>CTXN3</label>
    </interactant>
    <organismsDiffer>false</organismsDiffer>
    <experiments>3</experiments>
</comment>
<comment type="interaction">
    <interactant intactId="EBI-3923617">
        <id>Q9H2K0</id>
    </interactant>
    <interactant intactId="EBI-3911467">
        <id>Q07325</id>
        <label>CXCL9</label>
    </interactant>
    <organismsDiffer>false</organismsDiffer>
    <experiments>3</experiments>
</comment>
<comment type="interaction">
    <interactant intactId="EBI-3923617">
        <id>Q9H2K0</id>
    </interactant>
    <interactant intactId="EBI-2680384">
        <id>Q9BQA9</id>
        <label>CYBC1</label>
    </interactant>
    <organismsDiffer>false</organismsDiffer>
    <experiments>3</experiments>
</comment>
<comment type="interaction">
    <interactant intactId="EBI-3923617">
        <id>Q9H2K0</id>
    </interactant>
    <interactant intactId="EBI-1752413">
        <id>P78329</id>
        <label>CYP4F2</label>
    </interactant>
    <organismsDiffer>false</organismsDiffer>
    <experiments>3</experiments>
</comment>
<comment type="interaction">
    <interactant intactId="EBI-3923617">
        <id>Q9H2K0</id>
    </interactant>
    <interactant intactId="EBI-17468158">
        <id>Q6UW88-2</id>
        <label>EPGN</label>
    </interactant>
    <organismsDiffer>false</organismsDiffer>
    <experiments>3</experiments>
</comment>
<comment type="interaction">
    <interactant intactId="EBI-3923617">
        <id>Q9H2K0</id>
    </interactant>
    <interactant intactId="EBI-13049494">
        <id>Q9UGM5</id>
        <label>FETUB</label>
    </interactant>
    <organismsDiffer>false</organismsDiffer>
    <experiments>3</experiments>
</comment>
<comment type="interaction">
    <interactant intactId="EBI-3923617">
        <id>Q9H2K0</id>
    </interactant>
    <interactant intactId="EBI-12175685">
        <id>Q14802-3</id>
        <label>FXYD3</label>
    </interactant>
    <organismsDiffer>false</organismsDiffer>
    <experiments>3</experiments>
</comment>
<comment type="interaction">
    <interactant intactId="EBI-3923617">
        <id>Q9H2K0</id>
    </interactant>
    <interactant intactId="EBI-947253">
        <id>Q9UBD0</id>
        <label>HSFX2</label>
    </interactant>
    <organismsDiffer>false</organismsDiffer>
    <experiments>3</experiments>
</comment>
<comment type="interaction">
    <interactant intactId="EBI-3923617">
        <id>Q9H2K0</id>
    </interactant>
    <interactant intactId="EBI-12937691">
        <id>Q9BUP3-3</id>
        <label>HTATIP2</label>
    </interactant>
    <organismsDiffer>false</organismsDiffer>
    <experiments>3</experiments>
</comment>
<comment type="interaction">
    <interactant intactId="EBI-3923617">
        <id>Q9H2K0</id>
    </interactant>
    <interactant intactId="EBI-300173">
        <id>P05107</id>
        <label>ITGB2</label>
    </interactant>
    <organismsDiffer>false</organismsDiffer>
    <experiments>3</experiments>
</comment>
<comment type="interaction">
    <interactant intactId="EBI-3923617">
        <id>Q9H2K0</id>
    </interactant>
    <interactant intactId="EBI-10266796">
        <id>Q8N5M9</id>
        <label>JAGN1</label>
    </interactant>
    <organismsDiffer>false</organismsDiffer>
    <experiments>3</experiments>
</comment>
<comment type="interaction">
    <interactant intactId="EBI-3923617">
        <id>Q9H2K0</id>
    </interactant>
    <interactant intactId="EBI-3267258">
        <id>Q86VI4</id>
        <label>LAPTM4B</label>
    </interactant>
    <organismsDiffer>false</organismsDiffer>
    <experiments>3</experiments>
</comment>
<comment type="interaction">
    <interactant intactId="EBI-3923617">
        <id>Q9H2K0</id>
    </interactant>
    <interactant intactId="EBI-8070286">
        <id>O43561-2</id>
        <label>LAT</label>
    </interactant>
    <organismsDiffer>false</organismsDiffer>
    <experiments>3</experiments>
</comment>
<comment type="interaction">
    <interactant intactId="EBI-3923617">
        <id>Q9H2K0</id>
    </interactant>
    <interactant intactId="EBI-988319">
        <id>P01130</id>
        <label>LDLR</label>
    </interactant>
    <organismsDiffer>false</organismsDiffer>
    <experiments>3</experiments>
</comment>
<comment type="interaction">
    <interactant intactId="EBI-3923617">
        <id>Q9H2K0</id>
    </interactant>
    <interactant intactId="EBI-2820517">
        <id>Q8TAF8</id>
        <label>LHFPL5</label>
    </interactant>
    <organismsDiffer>false</organismsDiffer>
    <experiments>3</experiments>
</comment>
<comment type="interaction">
    <interactant intactId="EBI-3923617">
        <id>Q9H2K0</id>
    </interactant>
    <interactant intactId="EBI-724754">
        <id>O14880</id>
        <label>MGST3</label>
    </interactant>
    <organismsDiffer>false</organismsDiffer>
    <experiments>3</experiments>
</comment>
<comment type="interaction">
    <interactant intactId="EBI-3923617">
        <id>Q9H2K0</id>
    </interactant>
    <interactant intactId="EBI-995714">
        <id>Q9Y605</id>
        <label>MRFAP1</label>
    </interactant>
    <organismsDiffer>false</organismsDiffer>
    <experiments>3</experiments>
</comment>
<comment type="interaction">
    <interactant intactId="EBI-3923617">
        <id>Q9H2K0</id>
    </interactant>
    <interactant intactId="EBI-2808234">
        <id>P11836</id>
        <label>MS4A1</label>
    </interactant>
    <organismsDiffer>false</organismsDiffer>
    <experiments>3</experiments>
</comment>
<comment type="interaction">
    <interactant intactId="EBI-3923617">
        <id>Q9H2K0</id>
    </interactant>
    <interactant intactId="EBI-2863634">
        <id>Q9UHE5</id>
        <label>NAT8</label>
    </interactant>
    <organismsDiffer>false</organismsDiffer>
    <experiments>3</experiments>
</comment>
<comment type="interaction">
    <interactant intactId="EBI-3923617">
        <id>Q9H2K0</id>
    </interactant>
    <interactant intactId="EBI-11978907">
        <id>Q9ULP0-2</id>
        <label>NDRG4</label>
    </interactant>
    <organismsDiffer>false</organismsDiffer>
    <experiments>3</experiments>
</comment>
<comment type="interaction">
    <interactant intactId="EBI-3923617">
        <id>Q9H2K0</id>
    </interactant>
    <interactant intactId="EBI-721750">
        <id>Q8N138</id>
        <label>ORMDL3</label>
    </interactant>
    <organismsDiffer>false</organismsDiffer>
    <experiments>3</experiments>
</comment>
<comment type="interaction">
    <interactant intactId="EBI-3923617">
        <id>Q9H2K0</id>
    </interactant>
    <interactant intactId="EBI-692836">
        <id>P26678</id>
        <label>PLN</label>
    </interactant>
    <organismsDiffer>false</organismsDiffer>
    <experiments>3</experiments>
</comment>
<comment type="interaction">
    <interactant intactId="EBI-3923617">
        <id>Q9H2K0</id>
    </interactant>
    <interactant intactId="EBI-12188331">
        <id>P60201-2</id>
        <label>PLP1</label>
    </interactant>
    <organismsDiffer>false</organismsDiffer>
    <experiments>3</experiments>
</comment>
<comment type="interaction">
    <interactant intactId="EBI-3923617">
        <id>Q9H2K0</id>
    </interactant>
    <interactant intactId="EBI-1052363">
        <id>Q9NS64</id>
        <label>RPRM</label>
    </interactant>
    <organismsDiffer>false</organismsDiffer>
    <experiments>3</experiments>
</comment>
<comment type="interaction">
    <interactant intactId="EBI-3923617">
        <id>Q9H2K0</id>
    </interactant>
    <interactant intactId="EBI-2684237">
        <id>O00767</id>
        <label>SCD</label>
    </interactant>
    <organismsDiffer>false</organismsDiffer>
    <experiments>3</experiments>
</comment>
<comment type="interaction">
    <interactant intactId="EBI-3923617">
        <id>Q9H2K0</id>
    </interactant>
    <interactant intactId="EBI-9679163">
        <id>Q9Y6D0</id>
        <label>SELENOK</label>
    </interactant>
    <organismsDiffer>false</organismsDiffer>
    <experiments>3</experiments>
</comment>
<comment type="interaction">
    <interactant intactId="EBI-3923617">
        <id>Q9H2K0</id>
    </interactant>
    <interactant intactId="EBI-10329948">
        <id>Q9Y6X1</id>
        <label>SERP1</label>
    </interactant>
    <organismsDiffer>false</organismsDiffer>
    <experiments>3</experiments>
</comment>
<comment type="interaction">
    <interactant intactId="EBI-3923617">
        <id>Q9H2K0</id>
    </interactant>
    <interactant intactId="EBI-749270">
        <id>Q8N6R1</id>
        <label>SERP2</label>
    </interactant>
    <organismsDiffer>false</organismsDiffer>
    <experiments>3</experiments>
</comment>
<comment type="interaction">
    <interactant intactId="EBI-3923617">
        <id>Q9H2K0</id>
    </interactant>
    <interactant intactId="EBI-17284533">
        <id>A2A2V5</id>
        <label>SERTM1</label>
    </interactant>
    <organismsDiffer>false</organismsDiffer>
    <experiments>3</experiments>
</comment>
<comment type="interaction">
    <interactant intactId="EBI-3923617">
        <id>Q9H2K0</id>
    </interactant>
    <interactant intactId="EBI-747107">
        <id>Q8IUQ4</id>
        <label>SIAH1</label>
    </interactant>
    <organismsDiffer>false</organismsDiffer>
    <experiments>3</experiments>
</comment>
<comment type="interaction">
    <interactant intactId="EBI-3923617">
        <id>Q9H2K0</id>
    </interactant>
    <interactant intactId="EBI-1046690">
        <id>O60749</id>
        <label>SNX2</label>
    </interactant>
    <organismsDiffer>false</organismsDiffer>
    <experiments>3</experiments>
</comment>
<comment type="interaction">
    <interactant intactId="EBI-3923617">
        <id>Q9H2K0</id>
    </interactant>
    <interactant intactId="EBI-12023934">
        <id>Q5MJ10</id>
        <label>SPANXN2</label>
    </interactant>
    <organismsDiffer>false</organismsDiffer>
    <experiments>3</experiments>
</comment>
<comment type="interaction">
    <interactant intactId="EBI-3923617">
        <id>Q9H2K0</id>
    </interactant>
    <interactant intactId="EBI-17217258">
        <id>Q96DR4</id>
        <label>STARD4</label>
    </interactant>
    <organismsDiffer>false</organismsDiffer>
    <experiments>3</experiments>
</comment>
<comment type="interaction">
    <interactant intactId="EBI-3923617">
        <id>Q9H2K0</id>
    </interactant>
    <interactant intactId="EBI-738687">
        <id>P02808</id>
        <label>STATH</label>
    </interactant>
    <organismsDiffer>false</organismsDiffer>
    <experiments>3</experiments>
</comment>
<comment type="interaction">
    <interactant intactId="EBI-3923617">
        <id>Q9H2K0</id>
    </interactant>
    <interactant intactId="EBI-12200293">
        <id>P0DN84</id>
        <label>STRIT1</label>
    </interactant>
    <organismsDiffer>false</organismsDiffer>
    <experiments>3</experiments>
</comment>
<comment type="interaction">
    <interactant intactId="EBI-3923617">
        <id>Q9H2K0</id>
    </interactant>
    <interactant intactId="EBI-1394295">
        <id>Q13277</id>
        <label>STX3</label>
    </interactant>
    <organismsDiffer>false</organismsDiffer>
    <experiments>3</experiments>
</comment>
<comment type="interaction">
    <interactant intactId="EBI-3923617">
        <id>Q9H2K0</id>
    </interactant>
    <interactant intactId="EBI-2695795">
        <id>O43752</id>
        <label>STX6</label>
    </interactant>
    <organismsDiffer>false</organismsDiffer>
    <experiments>3</experiments>
</comment>
<comment type="interaction">
    <interactant intactId="EBI-3923617">
        <id>Q9H2K0</id>
    </interactant>
    <interactant intactId="EBI-941422">
        <id>P07204</id>
        <label>THBD</label>
    </interactant>
    <organismsDiffer>false</organismsDiffer>
    <experiments>3</experiments>
</comment>
<comment type="interaction">
    <interactant intactId="EBI-3923617">
        <id>Q9H2K0</id>
    </interactant>
    <interactant intactId="EBI-311394">
        <id>Q9C0I4</id>
        <label>THSD7B</label>
    </interactant>
    <organismsDiffer>false</organismsDiffer>
    <experiments>3</experiments>
</comment>
<comment type="interaction">
    <interactant intactId="EBI-3923617">
        <id>Q9H2K0</id>
    </interactant>
    <interactant intactId="EBI-11603430">
        <id>Q6PL24</id>
        <label>TMED8</label>
    </interactant>
    <organismsDiffer>false</organismsDiffer>
    <experiments>3</experiments>
</comment>
<comment type="interaction">
    <interactant intactId="EBI-3923617">
        <id>Q9H2K0</id>
    </interactant>
    <interactant intactId="EBI-1057733">
        <id>Q9BVC6</id>
        <label>TMEM109</label>
    </interactant>
    <organismsDiffer>false</organismsDiffer>
    <experiments>3</experiments>
</comment>
<comment type="interaction">
    <interactant intactId="EBI-3923617">
        <id>Q9H2K0</id>
    </interactant>
    <interactant intactId="EBI-723946">
        <id>P17152</id>
        <label>TMEM11</label>
    </interactant>
    <organismsDiffer>false</organismsDiffer>
    <experiments>3</experiments>
</comment>
<comment type="interaction">
    <interactant intactId="EBI-3923617">
        <id>Q9H2K0</id>
    </interactant>
    <interactant intactId="EBI-10694905">
        <id>Q5BJH2-2</id>
        <label>TMEM128</label>
    </interactant>
    <organismsDiffer>false</organismsDiffer>
    <experiments>3</experiments>
</comment>
<comment type="interaction">
    <interactant intactId="EBI-3923617">
        <id>Q9H2K0</id>
    </interactant>
    <interactant intactId="EBI-348587">
        <id>Q9BVK8</id>
        <label>TMEM147</label>
    </interactant>
    <organismsDiffer>false</organismsDiffer>
    <experiments>3</experiments>
</comment>
<comment type="interaction">
    <interactant intactId="EBI-3923617">
        <id>Q9H2K0</id>
    </interactant>
    <interactant intactId="EBI-2800645">
        <id>Q96HP8</id>
        <label>TMEM176A</label>
    </interactant>
    <organismsDiffer>false</organismsDiffer>
    <experiments>3</experiments>
</comment>
<comment type="interaction">
    <interactant intactId="EBI-3923617">
        <id>Q9H2K0</id>
    </interactant>
    <interactant intactId="EBI-10173151">
        <id>A2RU14</id>
        <label>TMEM218</label>
    </interactant>
    <organismsDiffer>false</organismsDiffer>
    <experiments>3</experiments>
</comment>
<comment type="interaction">
    <interactant intactId="EBI-3923617">
        <id>Q9H2K0</id>
    </interactant>
    <interactant intactId="EBI-11528917">
        <id>Q8WW34-2</id>
        <label>TMEM239</label>
    </interactant>
    <organismsDiffer>false</organismsDiffer>
    <experiments>3</experiments>
</comment>
<comment type="interaction">
    <interactant intactId="EBI-3923617">
        <id>Q9H2K0</id>
    </interactant>
    <interactant intactId="EBI-10315004">
        <id>Q9NWH2</id>
        <label>TMEM242</label>
    </interactant>
    <organismsDiffer>false</organismsDiffer>
    <experiments>3</experiments>
</comment>
<comment type="interaction">
    <interactant intactId="EBI-3923617">
        <id>Q9H2K0</id>
    </interactant>
    <interactant intactId="EBI-12887458">
        <id>Q9BU79</id>
        <label>TMEM243</label>
    </interactant>
    <organismsDiffer>false</organismsDiffer>
    <experiments>3</experiments>
</comment>
<comment type="interaction">
    <interactant intactId="EBI-3923617">
        <id>Q9H2K0</id>
    </interactant>
    <interactant intactId="EBI-11956809">
        <id>Q8TBM7</id>
        <label>TMEM254</label>
    </interactant>
    <organismsDiffer>false</organismsDiffer>
    <experiments>3</experiments>
</comment>
<comment type="interaction">
    <interactant intactId="EBI-3923617">
        <id>Q9H2K0</id>
    </interactant>
    <interactant intactId="EBI-12038591">
        <id>Q69YG0</id>
        <label>TMEM42</label>
    </interactant>
    <organismsDiffer>false</organismsDiffer>
    <experiments>3</experiments>
</comment>
<comment type="interaction">
    <interactant intactId="EBI-3923617">
        <id>Q9H2K0</id>
    </interactant>
    <interactant intactId="EBI-12111910">
        <id>Q5BJF2</id>
        <label>TMEM97</label>
    </interactant>
    <organismsDiffer>false</organismsDiffer>
    <experiments>3</experiments>
</comment>
<comment type="interaction">
    <interactant intactId="EBI-3923617">
        <id>Q9H2K0</id>
    </interactant>
    <interactant intactId="EBI-12045841">
        <id>Q86UF1</id>
        <label>TSPAN33</label>
    </interactant>
    <organismsDiffer>false</organismsDiffer>
    <experiments>3</experiments>
</comment>
<comment type="interaction">
    <interactant intactId="EBI-3923617">
        <id>Q9H2K0</id>
    </interactant>
    <interactant intactId="EBI-12261790">
        <id>A0A384ME17</id>
        <label>TUFM</label>
    </interactant>
    <organismsDiffer>false</organismsDiffer>
    <experiments>3</experiments>
</comment>
<comment type="interaction">
    <interactant intactId="EBI-3923617">
        <id>Q9H2K0</id>
    </interactant>
    <interactant intactId="EBI-11988865">
        <id>A5PKU2</id>
        <label>TUSC5</label>
    </interactant>
    <organismsDiffer>false</organismsDiffer>
    <experiments>3</experiments>
</comment>
<comment type="interaction">
    <interactant intactId="EBI-3923617">
        <id>Q9H2K0</id>
    </interactant>
    <interactant intactId="EBI-7601760">
        <id>Q53HI1</id>
        <label>UNC50</label>
    </interactant>
    <organismsDiffer>false</organismsDiffer>
    <experiments>3</experiments>
</comment>
<comment type="interaction">
    <interactant intactId="EBI-3923617">
        <id>Q9H2K0</id>
    </interactant>
    <interactant intactId="EBI-744953">
        <id>O75379</id>
        <label>VAMP4</label>
    </interactant>
    <organismsDiffer>false</organismsDiffer>
    <experiments>3</experiments>
</comment>
<comment type="interaction">
    <interactant intactId="EBI-3923617">
        <id>Q9H2K0</id>
    </interactant>
    <interactant intactId="EBI-11337915">
        <id>Q8N0U8</id>
        <label>VKORC1L1</label>
    </interactant>
    <organismsDiffer>false</organismsDiffer>
    <experiments>3</experiments>
</comment>
<comment type="interaction">
    <interactant intactId="EBI-3923617">
        <id>Q9H2K0</id>
    </interactant>
    <interactant intactId="EBI-751210">
        <id>Q96EC8</id>
        <label>YIPF6</label>
    </interactant>
    <organismsDiffer>false</organismsDiffer>
    <experiments>3</experiments>
</comment>
<comment type="interaction">
    <interactant intactId="EBI-3923617">
        <id>Q9H2K0</id>
    </interactant>
    <interactant intactId="EBI-12837904">
        <id>Q96MV8</id>
        <label>ZDHHC15</label>
    </interactant>
    <organismsDiffer>false</organismsDiffer>
    <experiments>3</experiments>
</comment>
<comment type="interaction">
    <interactant intactId="EBI-3923617">
        <id>Q9H2K0</id>
    </interactant>
    <interactant intactId="EBI-751960">
        <id>O95125</id>
        <label>ZNF202</label>
    </interactant>
    <organismsDiffer>false</organismsDiffer>
    <experiments>3</experiments>
</comment>
<comment type="interaction">
    <interactant intactId="EBI-3923617">
        <id>Q9H2K0</id>
    </interactant>
    <interactant intactId="EBI-13387614">
        <id>A0A087WZY1</id>
    </interactant>
    <organismsDiffer>false</organismsDiffer>
    <experiments>3</experiments>
</comment>
<comment type="subcellular location">
    <subcellularLocation>
        <location evidence="5">Mitochondrion</location>
    </subcellularLocation>
</comment>
<comment type="similarity">
    <text evidence="5">Belongs to the IF-3 family.</text>
</comment>
<comment type="sequence caution" evidence="5">
    <conflict type="frameshift">
        <sequence resource="EMBL-CDS" id="AAH39599"/>
    </conflict>
</comment>
<evidence type="ECO:0000256" key="1">
    <source>
        <dbReference type="SAM" id="MobiDB-lite"/>
    </source>
</evidence>
<evidence type="ECO:0000269" key="2">
    <source>
    </source>
</evidence>
<evidence type="ECO:0000269" key="3">
    <source>
    </source>
</evidence>
<evidence type="ECO:0000269" key="4">
    <source ref="2"/>
</evidence>
<evidence type="ECO:0000305" key="5"/>
<evidence type="ECO:0007829" key="6">
    <source>
        <dbReference type="PDB" id="6NEQ"/>
    </source>
</evidence>
<evidence type="ECO:0007829" key="7">
    <source>
        <dbReference type="PDB" id="8QRM"/>
    </source>
</evidence>